<keyword id="KW-0929">Antimicrobial</keyword>
<keyword id="KW-0081">Bacteriolytic enzyme</keyword>
<keyword id="KW-0903">Direct protein sequencing</keyword>
<keyword id="KW-1015">Disulfide bond</keyword>
<keyword id="KW-0326">Glycosidase</keyword>
<keyword id="KW-0378">Hydrolase</keyword>
<keyword id="KW-0964">Secreted</keyword>
<organism>
    <name type="scientific">Syrmaticus soemmerringii</name>
    <name type="common">Copper pheasant</name>
    <name type="synonym">Phasianus soemmerringii</name>
    <dbReference type="NCBI Taxonomy" id="9067"/>
    <lineage>
        <taxon>Eukaryota</taxon>
        <taxon>Metazoa</taxon>
        <taxon>Chordata</taxon>
        <taxon>Craniata</taxon>
        <taxon>Vertebrata</taxon>
        <taxon>Euteleostomi</taxon>
        <taxon>Archelosauria</taxon>
        <taxon>Archosauria</taxon>
        <taxon>Dinosauria</taxon>
        <taxon>Saurischia</taxon>
        <taxon>Theropoda</taxon>
        <taxon>Coelurosauria</taxon>
        <taxon>Aves</taxon>
        <taxon>Neognathae</taxon>
        <taxon>Galloanserae</taxon>
        <taxon>Galliformes</taxon>
        <taxon>Phasianidae</taxon>
        <taxon>Phasianinae</taxon>
        <taxon>Syrmaticus</taxon>
    </lineage>
</organism>
<sequence length="129" mass="14286">KVYGRCELAAAMKRLGLDNFRGYSLGNWVCAAKFESNFNTHATNRNTDGSTDYGILQINSRWWCNDGRTPGSRNLCNIPCSALLSSDTIASVNCAKKIVSDGNGMNAWVAWRKRCKGTDVNAWTRGCRL</sequence>
<name>LYSC_SYRSO</name>
<reference key="1">
    <citation type="journal article" date="1994" name="Biosci. Biotechnol. Biochem.">
        <title>The amino acid sequence of copper pheasant lysozyme.</title>
        <authorList>
            <person name="Araki T."/>
            <person name="Kuramoto M."/>
            <person name="Torikata T."/>
        </authorList>
    </citation>
    <scope>PROTEIN SEQUENCE</scope>
    <source>
        <tissue>Egg white</tissue>
    </source>
</reference>
<gene>
    <name type="primary">LYZ</name>
</gene>
<comment type="function">
    <text evidence="2">Lysozymes have primarily a bacteriolytic function; those in tissues and body fluids are associated with the monocyte-macrophage system and enhance the activity of immunoagents.</text>
</comment>
<comment type="catalytic activity">
    <reaction>
        <text>Hydrolysis of (1-&gt;4)-beta-linkages between N-acetylmuramic acid and N-acetyl-D-glucosamine residues in a peptidoglycan and between N-acetyl-D-glucosamine residues in chitodextrins.</text>
        <dbReference type="EC" id="3.2.1.17"/>
    </reaction>
</comment>
<comment type="subunit">
    <text evidence="1">Monomer.</text>
</comment>
<comment type="subcellular location">
    <subcellularLocation>
        <location>Secreted</location>
    </subcellularLocation>
</comment>
<comment type="miscellaneous">
    <text evidence="1">Lysozyme C is capable of both hydrolysis and transglycosylation; it also shows a slight esterase activity. It acts rapidly on both peptide-substituted and unsubstituted peptidoglycan, and slowly on chitin oligosaccharides (By similarity).</text>
</comment>
<comment type="similarity">
    <text evidence="2">Belongs to the glycosyl hydrolase 22 family.</text>
</comment>
<proteinExistence type="evidence at protein level"/>
<evidence type="ECO:0000250" key="1"/>
<evidence type="ECO:0000255" key="2">
    <source>
        <dbReference type="PROSITE-ProRule" id="PRU00680"/>
    </source>
</evidence>
<accession>P81711</accession>
<dbReference type="EC" id="3.2.1.17"/>
<dbReference type="PIR" id="JC2144">
    <property type="entry name" value="JC2144"/>
</dbReference>
<dbReference type="SMR" id="P81711"/>
<dbReference type="CAZy" id="GH22">
    <property type="family name" value="Glycoside Hydrolase Family 22"/>
</dbReference>
<dbReference type="GO" id="GO:0005576">
    <property type="term" value="C:extracellular region"/>
    <property type="evidence" value="ECO:0007669"/>
    <property type="project" value="UniProtKB-SubCell"/>
</dbReference>
<dbReference type="GO" id="GO:0003796">
    <property type="term" value="F:lysozyme activity"/>
    <property type="evidence" value="ECO:0007669"/>
    <property type="project" value="UniProtKB-EC"/>
</dbReference>
<dbReference type="GO" id="GO:0050829">
    <property type="term" value="P:defense response to Gram-negative bacterium"/>
    <property type="evidence" value="ECO:0007669"/>
    <property type="project" value="TreeGrafter"/>
</dbReference>
<dbReference type="GO" id="GO:0050830">
    <property type="term" value="P:defense response to Gram-positive bacterium"/>
    <property type="evidence" value="ECO:0007669"/>
    <property type="project" value="TreeGrafter"/>
</dbReference>
<dbReference type="GO" id="GO:0031640">
    <property type="term" value="P:killing of cells of another organism"/>
    <property type="evidence" value="ECO:0007669"/>
    <property type="project" value="UniProtKB-KW"/>
</dbReference>
<dbReference type="CDD" id="cd16897">
    <property type="entry name" value="LYZ_C"/>
    <property type="match status" value="1"/>
</dbReference>
<dbReference type="FunFam" id="1.10.530.10:FF:000001">
    <property type="entry name" value="Lysozyme C"/>
    <property type="match status" value="1"/>
</dbReference>
<dbReference type="Gene3D" id="1.10.530.10">
    <property type="match status" value="1"/>
</dbReference>
<dbReference type="InterPro" id="IPR001916">
    <property type="entry name" value="Glyco_hydro_22"/>
</dbReference>
<dbReference type="InterPro" id="IPR000974">
    <property type="entry name" value="Glyco_hydro_22_lys"/>
</dbReference>
<dbReference type="InterPro" id="IPR023346">
    <property type="entry name" value="Lysozyme-like_dom_sf"/>
</dbReference>
<dbReference type="PANTHER" id="PTHR11407">
    <property type="entry name" value="LYSOZYME C"/>
    <property type="match status" value="1"/>
</dbReference>
<dbReference type="PANTHER" id="PTHR11407:SF28">
    <property type="entry name" value="LYSOZYME C"/>
    <property type="match status" value="1"/>
</dbReference>
<dbReference type="Pfam" id="PF00062">
    <property type="entry name" value="Lys"/>
    <property type="match status" value="1"/>
</dbReference>
<dbReference type="PRINTS" id="PR00137">
    <property type="entry name" value="LYSOZYME"/>
</dbReference>
<dbReference type="PRINTS" id="PR00135">
    <property type="entry name" value="LYZLACT"/>
</dbReference>
<dbReference type="SMART" id="SM00263">
    <property type="entry name" value="LYZ1"/>
    <property type="match status" value="1"/>
</dbReference>
<dbReference type="SUPFAM" id="SSF53955">
    <property type="entry name" value="Lysozyme-like"/>
    <property type="match status" value="1"/>
</dbReference>
<dbReference type="PROSITE" id="PS51348">
    <property type="entry name" value="GLYCOSYL_HYDROL_F22_2"/>
    <property type="match status" value="1"/>
</dbReference>
<feature type="chain" id="PRO_0000208872" description="Lysozyme C">
    <location>
        <begin position="1"/>
        <end position="129"/>
    </location>
</feature>
<feature type="domain" description="C-type lysozyme" evidence="2">
    <location>
        <begin position="1"/>
        <end position="129"/>
    </location>
</feature>
<feature type="active site" evidence="2">
    <location>
        <position position="35"/>
    </location>
</feature>
<feature type="active site" evidence="2">
    <location>
        <position position="52"/>
    </location>
</feature>
<feature type="disulfide bond" evidence="2">
    <location>
        <begin position="6"/>
        <end position="127"/>
    </location>
</feature>
<feature type="disulfide bond" evidence="2">
    <location>
        <begin position="30"/>
        <end position="115"/>
    </location>
</feature>
<feature type="disulfide bond" evidence="2">
    <location>
        <begin position="64"/>
        <end position="80"/>
    </location>
</feature>
<feature type="disulfide bond" evidence="2">
    <location>
        <begin position="76"/>
        <end position="94"/>
    </location>
</feature>
<protein>
    <recommendedName>
        <fullName>Lysozyme C</fullName>
        <ecNumber>3.2.1.17</ecNumber>
    </recommendedName>
    <alternativeName>
        <fullName>1,4-beta-N-acetylmuramidase C</fullName>
    </alternativeName>
    <alternativeName>
        <fullName>CPL</fullName>
    </alternativeName>
</protein>